<evidence type="ECO:0000255" key="1">
    <source>
        <dbReference type="HAMAP-Rule" id="MF_01694"/>
    </source>
</evidence>
<evidence type="ECO:0000255" key="2">
    <source>
        <dbReference type="PROSITE-ProRule" id="PRU01266"/>
    </source>
</evidence>
<feature type="chain" id="PRO_0000381614" description="Biotin synthase">
    <location>
        <begin position="1"/>
        <end position="350"/>
    </location>
</feature>
<feature type="domain" description="Radical SAM core" evidence="2">
    <location>
        <begin position="41"/>
        <end position="268"/>
    </location>
</feature>
<feature type="binding site" evidence="1">
    <location>
        <position position="56"/>
    </location>
    <ligand>
        <name>[4Fe-4S] cluster</name>
        <dbReference type="ChEBI" id="CHEBI:49883"/>
        <note>4Fe-4S-S-AdoMet</note>
    </ligand>
</feature>
<feature type="binding site" evidence="1">
    <location>
        <position position="60"/>
    </location>
    <ligand>
        <name>[4Fe-4S] cluster</name>
        <dbReference type="ChEBI" id="CHEBI:49883"/>
        <note>4Fe-4S-S-AdoMet</note>
    </ligand>
</feature>
<feature type="binding site" evidence="1">
    <location>
        <position position="63"/>
    </location>
    <ligand>
        <name>[4Fe-4S] cluster</name>
        <dbReference type="ChEBI" id="CHEBI:49883"/>
        <note>4Fe-4S-S-AdoMet</note>
    </ligand>
</feature>
<feature type="binding site" evidence="1">
    <location>
        <position position="100"/>
    </location>
    <ligand>
        <name>[2Fe-2S] cluster</name>
        <dbReference type="ChEBI" id="CHEBI:190135"/>
    </ligand>
</feature>
<feature type="binding site" evidence="1">
    <location>
        <position position="131"/>
    </location>
    <ligand>
        <name>[2Fe-2S] cluster</name>
        <dbReference type="ChEBI" id="CHEBI:190135"/>
    </ligand>
</feature>
<feature type="binding site" evidence="1">
    <location>
        <position position="191"/>
    </location>
    <ligand>
        <name>[2Fe-2S] cluster</name>
        <dbReference type="ChEBI" id="CHEBI:190135"/>
    </ligand>
</feature>
<feature type="binding site" evidence="1">
    <location>
        <position position="263"/>
    </location>
    <ligand>
        <name>[2Fe-2S] cluster</name>
        <dbReference type="ChEBI" id="CHEBI:190135"/>
    </ligand>
</feature>
<protein>
    <recommendedName>
        <fullName evidence="1">Biotin synthase</fullName>
        <ecNumber evidence="1">2.8.1.6</ecNumber>
    </recommendedName>
</protein>
<proteinExistence type="inferred from homology"/>
<comment type="function">
    <text evidence="1">Catalyzes the conversion of dethiobiotin (DTB) to biotin by the insertion of a sulfur atom into dethiobiotin via a radical-based mechanism.</text>
</comment>
<comment type="catalytic activity">
    <reaction evidence="1">
        <text>(4R,5S)-dethiobiotin + (sulfur carrier)-SH + 2 reduced [2Fe-2S]-[ferredoxin] + 2 S-adenosyl-L-methionine = (sulfur carrier)-H + biotin + 2 5'-deoxyadenosine + 2 L-methionine + 2 oxidized [2Fe-2S]-[ferredoxin]</text>
        <dbReference type="Rhea" id="RHEA:22060"/>
        <dbReference type="Rhea" id="RHEA-COMP:10000"/>
        <dbReference type="Rhea" id="RHEA-COMP:10001"/>
        <dbReference type="Rhea" id="RHEA-COMP:14737"/>
        <dbReference type="Rhea" id="RHEA-COMP:14739"/>
        <dbReference type="ChEBI" id="CHEBI:17319"/>
        <dbReference type="ChEBI" id="CHEBI:29917"/>
        <dbReference type="ChEBI" id="CHEBI:33737"/>
        <dbReference type="ChEBI" id="CHEBI:33738"/>
        <dbReference type="ChEBI" id="CHEBI:57586"/>
        <dbReference type="ChEBI" id="CHEBI:57844"/>
        <dbReference type="ChEBI" id="CHEBI:59789"/>
        <dbReference type="ChEBI" id="CHEBI:64428"/>
        <dbReference type="ChEBI" id="CHEBI:149473"/>
        <dbReference type="EC" id="2.8.1.6"/>
    </reaction>
</comment>
<comment type="cofactor">
    <cofactor evidence="1">
        <name>[4Fe-4S] cluster</name>
        <dbReference type="ChEBI" id="CHEBI:49883"/>
    </cofactor>
    <text evidence="1">Binds 1 [4Fe-4S] cluster. The cluster is coordinated with 3 cysteines and an exchangeable S-adenosyl-L-methionine.</text>
</comment>
<comment type="cofactor">
    <cofactor evidence="1">
        <name>[2Fe-2S] cluster</name>
        <dbReference type="ChEBI" id="CHEBI:190135"/>
    </cofactor>
    <text evidence="1">Binds 1 [2Fe-2S] cluster. The cluster is coordinated with 3 cysteines and 1 arginine.</text>
</comment>
<comment type="pathway">
    <text evidence="1">Cofactor biosynthesis; biotin biosynthesis; biotin from 7,8-diaminononanoate: step 2/2.</text>
</comment>
<comment type="subunit">
    <text evidence="1">Homodimer.</text>
</comment>
<comment type="similarity">
    <text evidence="1">Belongs to the radical SAM superfamily. Biotin synthase family.</text>
</comment>
<keyword id="KW-0001">2Fe-2S</keyword>
<keyword id="KW-0004">4Fe-4S</keyword>
<keyword id="KW-0093">Biotin biosynthesis</keyword>
<keyword id="KW-0408">Iron</keyword>
<keyword id="KW-0411">Iron-sulfur</keyword>
<keyword id="KW-0479">Metal-binding</keyword>
<keyword id="KW-1185">Reference proteome</keyword>
<keyword id="KW-0949">S-adenosyl-L-methionine</keyword>
<keyword id="KW-0808">Transferase</keyword>
<organism>
    <name type="scientific">Shewanella baltica (strain OS155 / ATCC BAA-1091)</name>
    <dbReference type="NCBI Taxonomy" id="325240"/>
    <lineage>
        <taxon>Bacteria</taxon>
        <taxon>Pseudomonadati</taxon>
        <taxon>Pseudomonadota</taxon>
        <taxon>Gammaproteobacteria</taxon>
        <taxon>Alteromonadales</taxon>
        <taxon>Shewanellaceae</taxon>
        <taxon>Shewanella</taxon>
    </lineage>
</organism>
<name>BIOB_SHEB5</name>
<accession>A3D3F2</accession>
<sequence>MSQLQVRHDWKREEIEALFALPMNDLLFKAHSIHREVYDPNEVQISRLLSIKTGACPEDCKYCPQSARYDTGLEKERLLAMETVLTEARSAKAAGASRFCMGAAWRNPKEKDMPYLKQMVQEVKALGMETCMTLGMLSEDQANDLASAGLDYYNHNLDTSPEYYGDVITTRTYQNRLDTLTNVRASGMKVCSGGIVGMGEKATDRAGLLQQLANLPQHPDSVPINMLVKVAGTPFEKLDDLDPLEFVRTIAVARILMPLSRVRLSAGRENMSDELQAMCFFAGANSIFYGCKLLTTPNPEESDDMGLFRRLGLRPEQGAAAKLEEESAVLAKAAAYQDKSSAQFYDAGAL</sequence>
<dbReference type="EC" id="2.8.1.6" evidence="1"/>
<dbReference type="EMBL" id="CP000563">
    <property type="protein sequence ID" value="ABN61265.1"/>
    <property type="molecule type" value="Genomic_DNA"/>
</dbReference>
<dbReference type="RefSeq" id="WP_006081265.1">
    <property type="nucleotide sequence ID" value="NC_009052.1"/>
</dbReference>
<dbReference type="SMR" id="A3D3F2"/>
<dbReference type="STRING" id="325240.Sbal_1758"/>
<dbReference type="GeneID" id="11772018"/>
<dbReference type="KEGG" id="sbl:Sbal_1758"/>
<dbReference type="HOGENOM" id="CLU_033172_1_2_6"/>
<dbReference type="OrthoDB" id="9786826at2"/>
<dbReference type="UniPathway" id="UPA00078">
    <property type="reaction ID" value="UER00162"/>
</dbReference>
<dbReference type="Proteomes" id="UP000001557">
    <property type="component" value="Chromosome"/>
</dbReference>
<dbReference type="GO" id="GO:0051537">
    <property type="term" value="F:2 iron, 2 sulfur cluster binding"/>
    <property type="evidence" value="ECO:0007669"/>
    <property type="project" value="UniProtKB-KW"/>
</dbReference>
<dbReference type="GO" id="GO:0051539">
    <property type="term" value="F:4 iron, 4 sulfur cluster binding"/>
    <property type="evidence" value="ECO:0007669"/>
    <property type="project" value="UniProtKB-KW"/>
</dbReference>
<dbReference type="GO" id="GO:0004076">
    <property type="term" value="F:biotin synthase activity"/>
    <property type="evidence" value="ECO:0007669"/>
    <property type="project" value="UniProtKB-UniRule"/>
</dbReference>
<dbReference type="GO" id="GO:0005506">
    <property type="term" value="F:iron ion binding"/>
    <property type="evidence" value="ECO:0007669"/>
    <property type="project" value="UniProtKB-UniRule"/>
</dbReference>
<dbReference type="GO" id="GO:0009102">
    <property type="term" value="P:biotin biosynthetic process"/>
    <property type="evidence" value="ECO:0007669"/>
    <property type="project" value="UniProtKB-UniRule"/>
</dbReference>
<dbReference type="CDD" id="cd01335">
    <property type="entry name" value="Radical_SAM"/>
    <property type="match status" value="1"/>
</dbReference>
<dbReference type="FunFam" id="3.20.20.70:FF:000011">
    <property type="entry name" value="Biotin synthase"/>
    <property type="match status" value="1"/>
</dbReference>
<dbReference type="Gene3D" id="3.20.20.70">
    <property type="entry name" value="Aldolase class I"/>
    <property type="match status" value="1"/>
</dbReference>
<dbReference type="HAMAP" id="MF_01694">
    <property type="entry name" value="BioB"/>
    <property type="match status" value="1"/>
</dbReference>
<dbReference type="InterPro" id="IPR013785">
    <property type="entry name" value="Aldolase_TIM"/>
</dbReference>
<dbReference type="InterPro" id="IPR010722">
    <property type="entry name" value="BATS_dom"/>
</dbReference>
<dbReference type="InterPro" id="IPR002684">
    <property type="entry name" value="Biotin_synth/BioAB"/>
</dbReference>
<dbReference type="InterPro" id="IPR024177">
    <property type="entry name" value="Biotin_synthase"/>
</dbReference>
<dbReference type="InterPro" id="IPR006638">
    <property type="entry name" value="Elp3/MiaA/NifB-like_rSAM"/>
</dbReference>
<dbReference type="InterPro" id="IPR007197">
    <property type="entry name" value="rSAM"/>
</dbReference>
<dbReference type="NCBIfam" id="TIGR00433">
    <property type="entry name" value="bioB"/>
    <property type="match status" value="1"/>
</dbReference>
<dbReference type="PANTHER" id="PTHR22976">
    <property type="entry name" value="BIOTIN SYNTHASE"/>
    <property type="match status" value="1"/>
</dbReference>
<dbReference type="PANTHER" id="PTHR22976:SF2">
    <property type="entry name" value="BIOTIN SYNTHASE, MITOCHONDRIAL"/>
    <property type="match status" value="1"/>
</dbReference>
<dbReference type="Pfam" id="PF06968">
    <property type="entry name" value="BATS"/>
    <property type="match status" value="1"/>
</dbReference>
<dbReference type="Pfam" id="PF04055">
    <property type="entry name" value="Radical_SAM"/>
    <property type="match status" value="1"/>
</dbReference>
<dbReference type="PIRSF" id="PIRSF001619">
    <property type="entry name" value="Biotin_synth"/>
    <property type="match status" value="1"/>
</dbReference>
<dbReference type="SFLD" id="SFLDF00272">
    <property type="entry name" value="biotin_synthase"/>
    <property type="match status" value="1"/>
</dbReference>
<dbReference type="SFLD" id="SFLDS00029">
    <property type="entry name" value="Radical_SAM"/>
    <property type="match status" value="1"/>
</dbReference>
<dbReference type="SMART" id="SM00876">
    <property type="entry name" value="BATS"/>
    <property type="match status" value="1"/>
</dbReference>
<dbReference type="SMART" id="SM00729">
    <property type="entry name" value="Elp3"/>
    <property type="match status" value="1"/>
</dbReference>
<dbReference type="SUPFAM" id="SSF102114">
    <property type="entry name" value="Radical SAM enzymes"/>
    <property type="match status" value="1"/>
</dbReference>
<dbReference type="PROSITE" id="PS51918">
    <property type="entry name" value="RADICAL_SAM"/>
    <property type="match status" value="1"/>
</dbReference>
<reference key="1">
    <citation type="submission" date="2007-02" db="EMBL/GenBank/DDBJ databases">
        <title>Complete sequence of chromosome of Shewanella baltica OS155.</title>
        <authorList>
            <consortium name="US DOE Joint Genome Institute"/>
            <person name="Copeland A."/>
            <person name="Lucas S."/>
            <person name="Lapidus A."/>
            <person name="Barry K."/>
            <person name="Detter J.C."/>
            <person name="Glavina del Rio T."/>
            <person name="Hammon N."/>
            <person name="Israni S."/>
            <person name="Dalin E."/>
            <person name="Tice H."/>
            <person name="Pitluck S."/>
            <person name="Sims D.R."/>
            <person name="Brettin T."/>
            <person name="Bruce D."/>
            <person name="Han C."/>
            <person name="Tapia R."/>
            <person name="Brainard J."/>
            <person name="Schmutz J."/>
            <person name="Larimer F."/>
            <person name="Land M."/>
            <person name="Hauser L."/>
            <person name="Kyrpides N."/>
            <person name="Mikhailova N."/>
            <person name="Brettar I."/>
            <person name="Klappenbach J."/>
            <person name="Konstantinidis K."/>
            <person name="Rodrigues J."/>
            <person name="Tiedje J."/>
            <person name="Richardson P."/>
        </authorList>
    </citation>
    <scope>NUCLEOTIDE SEQUENCE [LARGE SCALE GENOMIC DNA]</scope>
    <source>
        <strain>OS155 / ATCC BAA-1091</strain>
    </source>
</reference>
<gene>
    <name evidence="1" type="primary">bioB</name>
    <name type="ordered locus">Sbal_1758</name>
</gene>